<proteinExistence type="evidence at protein level"/>
<protein>
    <recommendedName>
        <fullName>Shikimate O-hydroxycinnamoyltransferase</fullName>
        <ecNumber>2.3.1.133</ecNumber>
    </recommendedName>
    <alternativeName>
        <fullName>Hydroxycinnamoyl transferase</fullName>
    </alternativeName>
    <alternativeName>
        <fullName>Hydroxycinnamoyl-Coenzyme A shikimate/quinate hydroxycinnamoyltransferase</fullName>
    </alternativeName>
</protein>
<accession>Q8GSM7</accession>
<keyword id="KW-0012">Acyltransferase</keyword>
<keyword id="KW-0903">Direct protein sequencing</keyword>
<keyword id="KW-1185">Reference proteome</keyword>
<keyword id="KW-0808">Transferase</keyword>
<evidence type="ECO:0000255" key="1"/>
<evidence type="ECO:0000269" key="2">
    <source>
    </source>
</evidence>
<evidence type="ECO:0000269" key="3">
    <source>
    </source>
</evidence>
<evidence type="ECO:0000305" key="4"/>
<organism>
    <name type="scientific">Nicotiana tabacum</name>
    <name type="common">Common tobacco</name>
    <dbReference type="NCBI Taxonomy" id="4097"/>
    <lineage>
        <taxon>Eukaryota</taxon>
        <taxon>Viridiplantae</taxon>
        <taxon>Streptophyta</taxon>
        <taxon>Embryophyta</taxon>
        <taxon>Tracheophyta</taxon>
        <taxon>Spermatophyta</taxon>
        <taxon>Magnoliopsida</taxon>
        <taxon>eudicotyledons</taxon>
        <taxon>Gunneridae</taxon>
        <taxon>Pentapetalae</taxon>
        <taxon>asterids</taxon>
        <taxon>lamiids</taxon>
        <taxon>Solanales</taxon>
        <taxon>Solanaceae</taxon>
        <taxon>Nicotianoideae</taxon>
        <taxon>Nicotianeae</taxon>
        <taxon>Nicotiana</taxon>
    </lineage>
</organism>
<dbReference type="EC" id="2.3.1.133"/>
<dbReference type="EMBL" id="AJ507825">
    <property type="protein sequence ID" value="CAD47830.1"/>
    <property type="molecule type" value="mRNA"/>
</dbReference>
<dbReference type="RefSeq" id="NP_001312552.1">
    <property type="nucleotide sequence ID" value="NM_001325623.1"/>
</dbReference>
<dbReference type="RefSeq" id="XP_016474935.1">
    <property type="nucleotide sequence ID" value="XM_016619449.1"/>
</dbReference>
<dbReference type="SMR" id="Q8GSM7"/>
<dbReference type="STRING" id="4097.Q8GSM7"/>
<dbReference type="PaxDb" id="4097-Q8GSM7"/>
<dbReference type="GeneID" id="107796658"/>
<dbReference type="KEGG" id="nta:107796658"/>
<dbReference type="OMA" id="DRMDNDY"/>
<dbReference type="OrthoDB" id="671439at2759"/>
<dbReference type="PhylomeDB" id="Q8GSM7"/>
<dbReference type="BioCyc" id="MetaCyc:MONOMER-12138"/>
<dbReference type="BRENDA" id="2.3.1.133">
    <property type="organism ID" value="3645"/>
</dbReference>
<dbReference type="BRENDA" id="2.3.1.99">
    <property type="organism ID" value="3645"/>
</dbReference>
<dbReference type="SABIO-RK" id="Q8GSM7"/>
<dbReference type="Proteomes" id="UP000084051">
    <property type="component" value="Unplaced"/>
</dbReference>
<dbReference type="GO" id="GO:0016747">
    <property type="term" value="F:acyltransferase activity, transferring groups other than amino-acyl groups"/>
    <property type="evidence" value="ECO:0000318"/>
    <property type="project" value="GO_Central"/>
</dbReference>
<dbReference type="GO" id="GO:0047172">
    <property type="term" value="F:shikimate O-hydroxycinnamoyltransferase activity"/>
    <property type="evidence" value="ECO:0007669"/>
    <property type="project" value="UniProtKB-EC"/>
</dbReference>
<dbReference type="FunFam" id="3.30.559.10:FF:000015">
    <property type="entry name" value="Spermidine hydroxycinnamoyl transferase"/>
    <property type="match status" value="1"/>
</dbReference>
<dbReference type="FunFam" id="3.30.559.10:FF:000008">
    <property type="entry name" value="Tryptamine hydroxycinnamoyl transferase"/>
    <property type="match status" value="1"/>
</dbReference>
<dbReference type="Gene3D" id="3.30.559.10">
    <property type="entry name" value="Chloramphenicol acetyltransferase-like domain"/>
    <property type="match status" value="2"/>
</dbReference>
<dbReference type="InterPro" id="IPR023213">
    <property type="entry name" value="CAT-like_dom_sf"/>
</dbReference>
<dbReference type="InterPro" id="IPR050317">
    <property type="entry name" value="Plant_Fungal_Acyltransferase"/>
</dbReference>
<dbReference type="PANTHER" id="PTHR31642:SF11">
    <property type="entry name" value="SHIKIMATE O-HYDROXYCINNAMOYLTRANSFERASE"/>
    <property type="match status" value="1"/>
</dbReference>
<dbReference type="PANTHER" id="PTHR31642">
    <property type="entry name" value="TRICHOTHECENE 3-O-ACETYLTRANSFERASE"/>
    <property type="match status" value="1"/>
</dbReference>
<dbReference type="Pfam" id="PF02458">
    <property type="entry name" value="Transferase"/>
    <property type="match status" value="1"/>
</dbReference>
<sequence>MKIEVKESTMVKPAAETPQQRLWNSNVDLVVPNFHTPSVYFYRPTGSPNFFDGKVLKEALSKALVPFYPMAGRLCRDEDGRIEIDCKGQGVLFVEAESDGVVDDFGDFAPTLELRQLIPAVDYSQGIQSYALLVLQITHFKCGGVSLGVGMQHHAADGASGLHFINTWSDMARGLDLTIPPFIDRTLLRARDPPQPQFPHVEYQPPPTLKVTPENTPISEAVPETSVSIFKLTRDQINTLKAKSKEDGNTVNYSSYEMLAGHVWRSTCMARGLAHDQETKLYIATDGRSRLRPSLPPGYFGNVIFTTTPIAVAGDIQSKPIWYAASKLHDALARMDNDYLRSALDYLELQPDLKALVRGAHTFKCPNLGITSWSRLPIHDADFGWGRPIFMGPGGIAYEGLSFILPSPTNDGSQSVAISLQAEHMKLFEKFLYDF</sequence>
<gene>
    <name type="primary">HST</name>
    <name type="synonym">HCT</name>
</gene>
<name>HST_TOBAC</name>
<reference key="1">
    <citation type="journal article" date="2003" name="J. Biol. Chem.">
        <title>Purification, cloning, and properties of an acyltransferase controlling shikimate and quinate ester intermediates in phenylpropanoid metabolism.</title>
        <authorList>
            <person name="Hoffmann L."/>
            <person name="Maury S."/>
            <person name="Martz F."/>
            <person name="Geoffroy P."/>
            <person name="Legrand M."/>
        </authorList>
    </citation>
    <scope>NUCLEOTIDE SEQUENCE [MRNA]</scope>
    <scope>PROTEIN SEQUENCE OF 1-18</scope>
    <scope>FUNCTION</scope>
    <scope>CATALYTIC ACTIVITY</scope>
    <scope>BIOPHYSICOCHEMICAL PROPERTIES</scope>
    <source>
        <tissue>Stem</tissue>
    </source>
</reference>
<reference key="2">
    <citation type="journal article" date="2004" name="Plant Cell">
        <title>Silencing of hydroxycinnamoyl-coenzyme A shikimate/quinate hydroxycinnamoyltransferase affects phenylpropanoid biosynthesis.</title>
        <authorList>
            <person name="Hoffmann L."/>
            <person name="Besseau S."/>
            <person name="Geoffroy P."/>
            <person name="Ritzenthaler C."/>
            <person name="Meyer D."/>
            <person name="Lapierre C."/>
            <person name="Pollet B."/>
            <person name="Legrand M."/>
        </authorList>
    </citation>
    <scope>FUNCTION</scope>
    <scope>CATALYTIC ACTIVITY</scope>
    <scope>TISSUE SPECIFICITY</scope>
</reference>
<comment type="function">
    <text evidence="2 3">Acyltransferase involved in the biosynthesis of lignin. The affinity for shikimate as acceptor is 100-fold higher than for quinate. The most efficient donors are caffeoyl-CoA &gt; p-coumaroyl-CoA &gt; feruloyl-CoA &gt;&gt; sinapoyl-CoA.</text>
</comment>
<comment type="catalytic activity">
    <reaction evidence="2 3">
        <text>shikimate + 4-coumaroyl-CoA = trans-4-coumaroylshikimate + CoA</text>
        <dbReference type="Rhea" id="RHEA:12124"/>
        <dbReference type="ChEBI" id="CHEBI:36208"/>
        <dbReference type="ChEBI" id="CHEBI:57287"/>
        <dbReference type="ChEBI" id="CHEBI:57355"/>
        <dbReference type="ChEBI" id="CHEBI:57768"/>
        <dbReference type="EC" id="2.3.1.133"/>
    </reaction>
</comment>
<comment type="biophysicochemical properties">
    <kinetics>
        <KM evidence="2">600 uM for p-coumaroyl-CoA (with shikimate as cosubstrate)</KM>
        <KM evidence="2">50 uM for caffeoyl-CoA (with shikimate as cosubstrate)</KM>
        <KM evidence="2">350 uM for feruloyl-CoA (with shikimate as cosubstrate)</KM>
        <KM evidence="2">150 uM for p-coumaroyl-CoA (with quinate as cosubstrate)</KM>
        <KM evidence="2">730 uM for caffeoyl-CoA (with quinate as cosubstrate)</KM>
        <KM evidence="2">750 uM for shikimate (with p-coumaroyl-CoA as cosubstrate)</KM>
        <KM evidence="2">70.1 uM for quinate (with p-coumaroyl-CoA as cosubstrate)</KM>
        <Vmax evidence="2">65.0 pmol/sec/mg enzyme with p-coumaroyl-CoA as substrate and shikimate as cosubstrate</Vmax>
        <Vmax evidence="2">15.0 pmol/sec/mg enzyme with caffeoyl-CoA as substrate and shikimate as cosubstrate</Vmax>
        <Vmax evidence="2">10.0 pmol/sec/mg enzyme with feruloyl-CoA as substrate and shikimate as cosubstrate</Vmax>
        <Vmax evidence="2">4.6 pmol/sec/mg enzyme with p-coumaroyl-CoA as substrate and quinate as cosubstrate</Vmax>
        <Vmax evidence="2">1.4 pmol/sec/mg enzyme with caffeoyl-CoA as substrate and quinate as cosubstrate</Vmax>
        <Vmax evidence="2">140.0 pmol/sec/mg enzyme with shikimate as substrate and p-coumaroyl-CoA as cosubstrate</Vmax>
        <Vmax evidence="2">21.0 pmol/sec/mg enzyme with quinate as substrate and p-coumaroyl-CoA as cosubstrate</Vmax>
    </kinetics>
</comment>
<comment type="tissue specificity">
    <text evidence="3">Highly expressed in stem vascular tissues.</text>
</comment>
<comment type="similarity">
    <text evidence="4">Belongs to the plant acyltransferase family.</text>
</comment>
<feature type="chain" id="PRO_0000409593" description="Shikimate O-hydroxycinnamoyltransferase">
    <location>
        <begin position="1"/>
        <end position="435"/>
    </location>
</feature>
<feature type="active site" description="Proton acceptor" evidence="1">
    <location>
        <position position="153"/>
    </location>
</feature>
<feature type="active site" description="Proton acceptor" evidence="1">
    <location>
        <position position="382"/>
    </location>
</feature>
<feature type="sequence conflict" description="In Ref. 1; AA sequence." evidence="4" ref="1">
    <original>A</original>
    <variation>T</variation>
    <location>
        <position position="15"/>
    </location>
</feature>